<dbReference type="EC" id="4.1.3.39" evidence="1"/>
<dbReference type="EMBL" id="CP001336">
    <property type="protein sequence ID" value="ACL19302.1"/>
    <property type="molecule type" value="Genomic_DNA"/>
</dbReference>
<dbReference type="RefSeq" id="WP_015943316.1">
    <property type="nucleotide sequence ID" value="NC_011830.1"/>
</dbReference>
<dbReference type="SMR" id="B8G187"/>
<dbReference type="KEGG" id="dhd:Dhaf_1245"/>
<dbReference type="HOGENOM" id="CLU_049173_0_0_9"/>
<dbReference type="Proteomes" id="UP000007726">
    <property type="component" value="Chromosome"/>
</dbReference>
<dbReference type="GO" id="GO:0003852">
    <property type="term" value="F:2-isopropylmalate synthase activity"/>
    <property type="evidence" value="ECO:0007669"/>
    <property type="project" value="TreeGrafter"/>
</dbReference>
<dbReference type="GO" id="GO:0008701">
    <property type="term" value="F:4-hydroxy-2-oxovalerate aldolase activity"/>
    <property type="evidence" value="ECO:0007669"/>
    <property type="project" value="UniProtKB-UniRule"/>
</dbReference>
<dbReference type="GO" id="GO:0030145">
    <property type="term" value="F:manganese ion binding"/>
    <property type="evidence" value="ECO:0007669"/>
    <property type="project" value="UniProtKB-UniRule"/>
</dbReference>
<dbReference type="GO" id="GO:0009056">
    <property type="term" value="P:catabolic process"/>
    <property type="evidence" value="ECO:0007669"/>
    <property type="project" value="UniProtKB-KW"/>
</dbReference>
<dbReference type="GO" id="GO:0009098">
    <property type="term" value="P:L-leucine biosynthetic process"/>
    <property type="evidence" value="ECO:0007669"/>
    <property type="project" value="TreeGrafter"/>
</dbReference>
<dbReference type="CDD" id="cd07943">
    <property type="entry name" value="DRE_TIM_HOA"/>
    <property type="match status" value="1"/>
</dbReference>
<dbReference type="Gene3D" id="1.10.8.60">
    <property type="match status" value="1"/>
</dbReference>
<dbReference type="Gene3D" id="3.20.20.70">
    <property type="entry name" value="Aldolase class I"/>
    <property type="match status" value="1"/>
</dbReference>
<dbReference type="HAMAP" id="MF_01656">
    <property type="entry name" value="HOA"/>
    <property type="match status" value="1"/>
</dbReference>
<dbReference type="InterPro" id="IPR050073">
    <property type="entry name" value="2-IPM_HCS-like"/>
</dbReference>
<dbReference type="InterPro" id="IPR017629">
    <property type="entry name" value="4OH_2_O-val_aldolase"/>
</dbReference>
<dbReference type="InterPro" id="IPR013785">
    <property type="entry name" value="Aldolase_TIM"/>
</dbReference>
<dbReference type="InterPro" id="IPR012425">
    <property type="entry name" value="DmpG_comm"/>
</dbReference>
<dbReference type="InterPro" id="IPR035685">
    <property type="entry name" value="DRE_TIM_HOA"/>
</dbReference>
<dbReference type="InterPro" id="IPR000891">
    <property type="entry name" value="PYR_CT"/>
</dbReference>
<dbReference type="NCBIfam" id="TIGR03217">
    <property type="entry name" value="4OH_2_O_val_ald"/>
    <property type="match status" value="1"/>
</dbReference>
<dbReference type="NCBIfam" id="NF006049">
    <property type="entry name" value="PRK08195.1"/>
    <property type="match status" value="1"/>
</dbReference>
<dbReference type="PANTHER" id="PTHR10277:SF9">
    <property type="entry name" value="2-ISOPROPYLMALATE SYNTHASE 1, CHLOROPLASTIC-RELATED"/>
    <property type="match status" value="1"/>
</dbReference>
<dbReference type="PANTHER" id="PTHR10277">
    <property type="entry name" value="HOMOCITRATE SYNTHASE-RELATED"/>
    <property type="match status" value="1"/>
</dbReference>
<dbReference type="Pfam" id="PF07836">
    <property type="entry name" value="DmpG_comm"/>
    <property type="match status" value="1"/>
</dbReference>
<dbReference type="Pfam" id="PF00682">
    <property type="entry name" value="HMGL-like"/>
    <property type="match status" value="1"/>
</dbReference>
<dbReference type="SUPFAM" id="SSF51569">
    <property type="entry name" value="Aldolase"/>
    <property type="match status" value="1"/>
</dbReference>
<dbReference type="SUPFAM" id="SSF89000">
    <property type="entry name" value="post-HMGL domain-like"/>
    <property type="match status" value="1"/>
</dbReference>
<dbReference type="PROSITE" id="PS50991">
    <property type="entry name" value="PYR_CT"/>
    <property type="match status" value="1"/>
</dbReference>
<proteinExistence type="inferred from homology"/>
<name>HOA_DESHD</name>
<protein>
    <recommendedName>
        <fullName evidence="1">4-hydroxy-2-oxovalerate aldolase</fullName>
        <shortName evidence="1">HOA</shortName>
        <ecNumber evidence="1">4.1.3.39</ecNumber>
    </recommendedName>
    <alternativeName>
        <fullName evidence="1">4-hydroxy-2-keto-pentanoic acid aldolase</fullName>
    </alternativeName>
    <alternativeName>
        <fullName evidence="1">4-hydroxy-2-oxopentanoate aldolase</fullName>
    </alternativeName>
</protein>
<feature type="chain" id="PRO_0000387823" description="4-hydroxy-2-oxovalerate aldolase">
    <location>
        <begin position="1"/>
        <end position="333"/>
    </location>
</feature>
<feature type="domain" description="Pyruvate carboxyltransferase" evidence="1">
    <location>
        <begin position="4"/>
        <end position="254"/>
    </location>
</feature>
<feature type="active site" description="Proton acceptor" evidence="1">
    <location>
        <position position="16"/>
    </location>
</feature>
<feature type="binding site" evidence="1">
    <location>
        <begin position="12"/>
        <end position="13"/>
    </location>
    <ligand>
        <name>substrate</name>
    </ligand>
</feature>
<feature type="binding site" evidence="1">
    <location>
        <position position="13"/>
    </location>
    <ligand>
        <name>Mn(2+)</name>
        <dbReference type="ChEBI" id="CHEBI:29035"/>
    </ligand>
</feature>
<feature type="binding site" evidence="1">
    <location>
        <position position="193"/>
    </location>
    <ligand>
        <name>Mn(2+)</name>
        <dbReference type="ChEBI" id="CHEBI:29035"/>
    </ligand>
</feature>
<feature type="binding site" evidence="1">
    <location>
        <position position="193"/>
    </location>
    <ligand>
        <name>substrate</name>
    </ligand>
</feature>
<feature type="binding site" evidence="1">
    <location>
        <position position="195"/>
    </location>
    <ligand>
        <name>Mn(2+)</name>
        <dbReference type="ChEBI" id="CHEBI:29035"/>
    </ligand>
</feature>
<feature type="binding site" evidence="1">
    <location>
        <position position="284"/>
    </location>
    <ligand>
        <name>substrate</name>
    </ligand>
</feature>
<feature type="site" description="Transition state stabilizer" evidence="1">
    <location>
        <position position="12"/>
    </location>
</feature>
<keyword id="KW-0058">Aromatic hydrocarbons catabolism</keyword>
<keyword id="KW-0456">Lyase</keyword>
<keyword id="KW-0464">Manganese</keyword>
<keyword id="KW-0479">Metal-binding</keyword>
<comment type="catalytic activity">
    <reaction evidence="1">
        <text>(S)-4-hydroxy-2-oxopentanoate = acetaldehyde + pyruvate</text>
        <dbReference type="Rhea" id="RHEA:22624"/>
        <dbReference type="ChEBI" id="CHEBI:15343"/>
        <dbReference type="ChEBI" id="CHEBI:15361"/>
        <dbReference type="ChEBI" id="CHEBI:73143"/>
        <dbReference type="EC" id="4.1.3.39"/>
    </reaction>
</comment>
<comment type="similarity">
    <text evidence="1">Belongs to the 4-hydroxy-2-oxovalerate aldolase family.</text>
</comment>
<organism>
    <name type="scientific">Desulfitobacterium hafniense (strain DSM 10664 / DCB-2)</name>
    <dbReference type="NCBI Taxonomy" id="272564"/>
    <lineage>
        <taxon>Bacteria</taxon>
        <taxon>Bacillati</taxon>
        <taxon>Bacillota</taxon>
        <taxon>Clostridia</taxon>
        <taxon>Eubacteriales</taxon>
        <taxon>Desulfitobacteriaceae</taxon>
        <taxon>Desulfitobacterium</taxon>
    </lineage>
</organism>
<evidence type="ECO:0000255" key="1">
    <source>
        <dbReference type="HAMAP-Rule" id="MF_01656"/>
    </source>
</evidence>
<reference key="1">
    <citation type="journal article" date="2012" name="BMC Microbiol.">
        <title>Genome sequence of Desulfitobacterium hafniense DCB-2, a Gram-positive anaerobe capable of dehalogenation and metal reduction.</title>
        <authorList>
            <person name="Kim S.H."/>
            <person name="Harzman C."/>
            <person name="Davis J.K."/>
            <person name="Hutcheson R."/>
            <person name="Broderick J.B."/>
            <person name="Marsh T.L."/>
            <person name="Tiedje J.M."/>
        </authorList>
    </citation>
    <scope>NUCLEOTIDE SEQUENCE [LARGE SCALE GENOMIC DNA]</scope>
    <source>
        <strain>DSM 10664 / DCB-2</strain>
    </source>
</reference>
<accession>B8G187</accession>
<gene>
    <name type="ordered locus">Dhaf_1245</name>
</gene>
<sequence>MKKVKIFDLTLRDGSHAKSHQFTPEQMAVLAEQIDSTGVAAIEFGHGNGLGGSALQYGFAAATDREYMEAVAPVVKNADLSIIILPGVGTRHELHLAKEFGAKYARMCTQITEVDIAEQHIKMAKQLGMIPIAVLPCAGIIPVKDTVRYTQMAESYGAEVIYLLDGGGYQLPEQTYERIAAMKKAVDVPIGFHGHNNLQLAVANSKAAVEAGAEYIDCCLKGFGAGAGNCPTEIFAAVMDRMEIDCGIDLYKTMDIAEQYLRPLMPRAMEVDNDRIMLGYAGCYSSFLLFAQRAGARYGVDPRDIIKEIGRRQCTEGQEDICIDVAYALAQKK</sequence>